<dbReference type="EMBL" id="CU928162">
    <property type="protein sequence ID" value="CAR09321.2"/>
    <property type="molecule type" value="Genomic_DNA"/>
</dbReference>
<dbReference type="RefSeq" id="WP_000010781.1">
    <property type="nucleotide sequence ID" value="NC_011745.1"/>
</dbReference>
<dbReference type="SMR" id="B7MZ04"/>
<dbReference type="KEGG" id="ecq:ECED1_3158"/>
<dbReference type="HOGENOM" id="CLU_000445_125_0_6"/>
<dbReference type="UniPathway" id="UPA00638"/>
<dbReference type="Proteomes" id="UP000000748">
    <property type="component" value="Chromosome"/>
</dbReference>
<dbReference type="GO" id="GO:0005524">
    <property type="term" value="F:ATP binding"/>
    <property type="evidence" value="ECO:0007669"/>
    <property type="project" value="UniProtKB-UniRule"/>
</dbReference>
<dbReference type="GO" id="GO:0016887">
    <property type="term" value="F:ATP hydrolysis activity"/>
    <property type="evidence" value="ECO:0007669"/>
    <property type="project" value="InterPro"/>
</dbReference>
<dbReference type="GO" id="GO:0003677">
    <property type="term" value="F:DNA binding"/>
    <property type="evidence" value="ECO:0007669"/>
    <property type="project" value="UniProtKB-KW"/>
</dbReference>
<dbReference type="GO" id="GO:0003700">
    <property type="term" value="F:DNA-binding transcription factor activity"/>
    <property type="evidence" value="ECO:0007669"/>
    <property type="project" value="UniProtKB-UniRule"/>
</dbReference>
<dbReference type="GO" id="GO:0000160">
    <property type="term" value="P:phosphorelay signal transduction system"/>
    <property type="evidence" value="ECO:0007669"/>
    <property type="project" value="UniProtKB-UniRule"/>
</dbReference>
<dbReference type="CDD" id="cd00009">
    <property type="entry name" value="AAA"/>
    <property type="match status" value="1"/>
</dbReference>
<dbReference type="FunFam" id="1.10.10.60:FF:000188">
    <property type="entry name" value="Anaerobic nitric oxide reductase transcription regulator NorR"/>
    <property type="match status" value="1"/>
</dbReference>
<dbReference type="FunFam" id="1.10.8.60:FF:000045">
    <property type="entry name" value="Anaerobic nitric oxide reductase transcription regulator NorR"/>
    <property type="match status" value="1"/>
</dbReference>
<dbReference type="FunFam" id="3.30.450.40:FF:000021">
    <property type="entry name" value="Anaerobic nitric oxide reductase transcription regulator NorR"/>
    <property type="match status" value="1"/>
</dbReference>
<dbReference type="FunFam" id="3.40.50.300:FF:000006">
    <property type="entry name" value="DNA-binding transcriptional regulator NtrC"/>
    <property type="match status" value="1"/>
</dbReference>
<dbReference type="Gene3D" id="1.10.8.60">
    <property type="match status" value="1"/>
</dbReference>
<dbReference type="Gene3D" id="3.30.450.40">
    <property type="match status" value="1"/>
</dbReference>
<dbReference type="Gene3D" id="1.10.10.60">
    <property type="entry name" value="Homeodomain-like"/>
    <property type="match status" value="1"/>
</dbReference>
<dbReference type="Gene3D" id="3.40.50.300">
    <property type="entry name" value="P-loop containing nucleotide triphosphate hydrolases"/>
    <property type="match status" value="1"/>
</dbReference>
<dbReference type="HAMAP" id="MF_01314">
    <property type="entry name" value="NorR"/>
    <property type="match status" value="1"/>
</dbReference>
<dbReference type="InterPro" id="IPR003593">
    <property type="entry name" value="AAA+_ATPase"/>
</dbReference>
<dbReference type="InterPro" id="IPR003018">
    <property type="entry name" value="GAF"/>
</dbReference>
<dbReference type="InterPro" id="IPR029016">
    <property type="entry name" value="GAF-like_dom_sf"/>
</dbReference>
<dbReference type="InterPro" id="IPR009057">
    <property type="entry name" value="Homeodomain-like_sf"/>
</dbReference>
<dbReference type="InterPro" id="IPR023944">
    <property type="entry name" value="NorR"/>
</dbReference>
<dbReference type="InterPro" id="IPR027417">
    <property type="entry name" value="P-loop_NTPase"/>
</dbReference>
<dbReference type="InterPro" id="IPR002078">
    <property type="entry name" value="Sigma_54_int"/>
</dbReference>
<dbReference type="InterPro" id="IPR025662">
    <property type="entry name" value="Sigma_54_int_dom_ATP-bd_1"/>
</dbReference>
<dbReference type="InterPro" id="IPR025943">
    <property type="entry name" value="Sigma_54_int_dom_ATP-bd_2"/>
</dbReference>
<dbReference type="InterPro" id="IPR025944">
    <property type="entry name" value="Sigma_54_int_dom_CS"/>
</dbReference>
<dbReference type="NCBIfam" id="NF003451">
    <property type="entry name" value="PRK05022.1"/>
    <property type="match status" value="1"/>
</dbReference>
<dbReference type="PANTHER" id="PTHR32071:SF35">
    <property type="entry name" value="ANAEROBIC NITRIC OXIDE REDUCTASE TRANSCRIPTION REGULATOR NORR"/>
    <property type="match status" value="1"/>
</dbReference>
<dbReference type="PANTHER" id="PTHR32071">
    <property type="entry name" value="TRANSCRIPTIONAL REGULATORY PROTEIN"/>
    <property type="match status" value="1"/>
</dbReference>
<dbReference type="Pfam" id="PF01590">
    <property type="entry name" value="GAF"/>
    <property type="match status" value="1"/>
</dbReference>
<dbReference type="Pfam" id="PF00158">
    <property type="entry name" value="Sigma54_activat"/>
    <property type="match status" value="1"/>
</dbReference>
<dbReference type="SMART" id="SM00382">
    <property type="entry name" value="AAA"/>
    <property type="match status" value="1"/>
</dbReference>
<dbReference type="SMART" id="SM00065">
    <property type="entry name" value="GAF"/>
    <property type="match status" value="1"/>
</dbReference>
<dbReference type="SUPFAM" id="SSF55781">
    <property type="entry name" value="GAF domain-like"/>
    <property type="match status" value="1"/>
</dbReference>
<dbReference type="SUPFAM" id="SSF46689">
    <property type="entry name" value="Homeodomain-like"/>
    <property type="match status" value="1"/>
</dbReference>
<dbReference type="SUPFAM" id="SSF52540">
    <property type="entry name" value="P-loop containing nucleoside triphosphate hydrolases"/>
    <property type="match status" value="1"/>
</dbReference>
<dbReference type="PROSITE" id="PS00675">
    <property type="entry name" value="SIGMA54_INTERACT_1"/>
    <property type="match status" value="1"/>
</dbReference>
<dbReference type="PROSITE" id="PS00676">
    <property type="entry name" value="SIGMA54_INTERACT_2"/>
    <property type="match status" value="1"/>
</dbReference>
<dbReference type="PROSITE" id="PS00688">
    <property type="entry name" value="SIGMA54_INTERACT_3"/>
    <property type="match status" value="1"/>
</dbReference>
<dbReference type="PROSITE" id="PS50045">
    <property type="entry name" value="SIGMA54_INTERACT_4"/>
    <property type="match status" value="1"/>
</dbReference>
<sequence>MSFSVDVLANIAIELQRGIGHQDRFQRLITTLRQVLECDASALLRYDSRQFIPLAIDGLAKDVLGRRFALEGHPRLEAIARAGDVVRFPADSELPDPYDGLIPGQESLKVHACVGLPLFAGQNLIGALTLDGMQPDQFDVFSNEELRLIAALAAGALSNALLIEQLESQNMLPGDAASFEAVKQTQMIGLSPGMTQLKKEIEIVAASDLNVLISGETGTGKELVAKAIHEASPRAVNPLVYLNCAALPESVAESELFGHVKGAFTGAISNRSGKFEMADNGTLFLDEIGELSLALQAKLLRVLQYGDIQRVGDDRSLRVDVRVLAATNRDLREEVLAGRFRADLFHRLSVFPLSVPPLRERGDDVILLAGYFCEQCRLRLGLSRVVLSAGARNLLQHYNFPGNVRELEHAIHRAVVLARATRSGDEVILEAQHFAFPEVTLPPPEVAAVPVVKQNLREATEAFQRETIRQALAQNHHNWAACARMLETDVANLHRLAKRLGLKD</sequence>
<evidence type="ECO:0000255" key="1">
    <source>
        <dbReference type="HAMAP-Rule" id="MF_01314"/>
    </source>
</evidence>
<reference key="1">
    <citation type="journal article" date="2009" name="PLoS Genet.">
        <title>Organised genome dynamics in the Escherichia coli species results in highly diverse adaptive paths.</title>
        <authorList>
            <person name="Touchon M."/>
            <person name="Hoede C."/>
            <person name="Tenaillon O."/>
            <person name="Barbe V."/>
            <person name="Baeriswyl S."/>
            <person name="Bidet P."/>
            <person name="Bingen E."/>
            <person name="Bonacorsi S."/>
            <person name="Bouchier C."/>
            <person name="Bouvet O."/>
            <person name="Calteau A."/>
            <person name="Chiapello H."/>
            <person name="Clermont O."/>
            <person name="Cruveiller S."/>
            <person name="Danchin A."/>
            <person name="Diard M."/>
            <person name="Dossat C."/>
            <person name="Karoui M.E."/>
            <person name="Frapy E."/>
            <person name="Garry L."/>
            <person name="Ghigo J.M."/>
            <person name="Gilles A.M."/>
            <person name="Johnson J."/>
            <person name="Le Bouguenec C."/>
            <person name="Lescat M."/>
            <person name="Mangenot S."/>
            <person name="Martinez-Jehanne V."/>
            <person name="Matic I."/>
            <person name="Nassif X."/>
            <person name="Oztas S."/>
            <person name="Petit M.A."/>
            <person name="Pichon C."/>
            <person name="Rouy Z."/>
            <person name="Ruf C.S."/>
            <person name="Schneider D."/>
            <person name="Tourret J."/>
            <person name="Vacherie B."/>
            <person name="Vallenet D."/>
            <person name="Medigue C."/>
            <person name="Rocha E.P.C."/>
            <person name="Denamur E."/>
        </authorList>
    </citation>
    <scope>NUCLEOTIDE SEQUENCE [LARGE SCALE GENOMIC DNA]</scope>
    <source>
        <strain>ED1a</strain>
    </source>
</reference>
<keyword id="KW-0067">ATP-binding</keyword>
<keyword id="KW-0238">DNA-binding</keyword>
<keyword id="KW-0547">Nucleotide-binding</keyword>
<keyword id="KW-0597">Phosphoprotein</keyword>
<keyword id="KW-0804">Transcription</keyword>
<keyword id="KW-0805">Transcription regulation</keyword>
<name>NORR_ECO81</name>
<accession>B7MZ04</accession>
<protein>
    <recommendedName>
        <fullName evidence="1">Anaerobic nitric oxide reductase transcription regulator NorR</fullName>
    </recommendedName>
</protein>
<organism>
    <name type="scientific">Escherichia coli O81 (strain ED1a)</name>
    <dbReference type="NCBI Taxonomy" id="585397"/>
    <lineage>
        <taxon>Bacteria</taxon>
        <taxon>Pseudomonadati</taxon>
        <taxon>Pseudomonadota</taxon>
        <taxon>Gammaproteobacteria</taxon>
        <taxon>Enterobacterales</taxon>
        <taxon>Enterobacteriaceae</taxon>
        <taxon>Escherichia</taxon>
    </lineage>
</organism>
<comment type="function">
    <text evidence="1">Required for the expression of anaerobic nitric oxide (NO) reductase, acts as a transcriptional activator for at least the norVW operon. Activation also requires sigma-54.</text>
</comment>
<comment type="pathway">
    <text evidence="1">Nitrogen metabolism; nitric oxide reduction.</text>
</comment>
<gene>
    <name evidence="1" type="primary">norR</name>
    <name type="ordered locus">ECED1_3158</name>
</gene>
<feature type="chain" id="PRO_1000165589" description="Anaerobic nitric oxide reductase transcription regulator NorR">
    <location>
        <begin position="1"/>
        <end position="504"/>
    </location>
</feature>
<feature type="domain" description="Sigma-54 factor interaction" evidence="1">
    <location>
        <begin position="187"/>
        <end position="416"/>
    </location>
</feature>
<feature type="DNA-binding region" description="H-T-H motif" evidence="1">
    <location>
        <begin position="479"/>
        <end position="498"/>
    </location>
</feature>
<feature type="binding site" evidence="1">
    <location>
        <begin position="215"/>
        <end position="222"/>
    </location>
    <ligand>
        <name>ATP</name>
        <dbReference type="ChEBI" id="CHEBI:30616"/>
    </ligand>
</feature>
<feature type="binding site" evidence="1">
    <location>
        <begin position="278"/>
        <end position="287"/>
    </location>
    <ligand>
        <name>ATP</name>
        <dbReference type="ChEBI" id="CHEBI:30616"/>
    </ligand>
</feature>
<feature type="modified residue" description="4-aspartylphosphate" evidence="1">
    <location>
        <position position="57"/>
    </location>
</feature>
<proteinExistence type="inferred from homology"/>